<keyword id="KW-0233">DNA recombination</keyword>
<keyword id="KW-0238">DNA-binding</keyword>
<keyword id="KW-1185">Reference proteome</keyword>
<keyword id="KW-0804">Transcription</keyword>
<keyword id="KW-0805">Transcription regulation</keyword>
<keyword id="KW-0810">Translation regulation</keyword>
<gene>
    <name evidence="1" type="primary">ihfA</name>
    <name evidence="1" type="synonym">himA</name>
    <name type="ordered locus">Sde_1583</name>
</gene>
<organism>
    <name type="scientific">Saccharophagus degradans (strain 2-40 / ATCC 43961 / DSM 17024)</name>
    <dbReference type="NCBI Taxonomy" id="203122"/>
    <lineage>
        <taxon>Bacteria</taxon>
        <taxon>Pseudomonadati</taxon>
        <taxon>Pseudomonadota</taxon>
        <taxon>Gammaproteobacteria</taxon>
        <taxon>Cellvibrionales</taxon>
        <taxon>Cellvibrionaceae</taxon>
        <taxon>Saccharophagus</taxon>
    </lineage>
</organism>
<reference key="1">
    <citation type="journal article" date="2008" name="PLoS Genet.">
        <title>Complete genome sequence of the complex carbohydrate-degrading marine bacterium, Saccharophagus degradans strain 2-40 T.</title>
        <authorList>
            <person name="Weiner R.M."/>
            <person name="Taylor L.E. II"/>
            <person name="Henrissat B."/>
            <person name="Hauser L."/>
            <person name="Land M."/>
            <person name="Coutinho P.M."/>
            <person name="Rancurel C."/>
            <person name="Saunders E.H."/>
            <person name="Longmire A.G."/>
            <person name="Zhang H."/>
            <person name="Bayer E.A."/>
            <person name="Gilbert H.J."/>
            <person name="Larimer F."/>
            <person name="Zhulin I.B."/>
            <person name="Ekborg N.A."/>
            <person name="Lamed R."/>
            <person name="Richardson P.M."/>
            <person name="Borovok I."/>
            <person name="Hutcheson S."/>
        </authorList>
    </citation>
    <scope>NUCLEOTIDE SEQUENCE [LARGE SCALE GENOMIC DNA]</scope>
    <source>
        <strain>2-40 / ATCC 43961 / DSM 17024</strain>
    </source>
</reference>
<comment type="function">
    <text evidence="1">This protein is one of the two subunits of integration host factor, a specific DNA-binding protein that functions in genetic recombination as well as in transcriptional and translational control.</text>
</comment>
<comment type="subunit">
    <text evidence="1">Heterodimer of an alpha and a beta chain.</text>
</comment>
<comment type="similarity">
    <text evidence="1">Belongs to the bacterial histone-like protein family.</text>
</comment>
<dbReference type="EMBL" id="CP000282">
    <property type="protein sequence ID" value="ABD80845.1"/>
    <property type="molecule type" value="Genomic_DNA"/>
</dbReference>
<dbReference type="RefSeq" id="WP_011468065.1">
    <property type="nucleotide sequence ID" value="NC_007912.1"/>
</dbReference>
<dbReference type="SMR" id="Q21KD4"/>
<dbReference type="STRING" id="203122.Sde_1583"/>
<dbReference type="GeneID" id="98613259"/>
<dbReference type="KEGG" id="sde:Sde_1583"/>
<dbReference type="eggNOG" id="COG0776">
    <property type="taxonomic scope" value="Bacteria"/>
</dbReference>
<dbReference type="HOGENOM" id="CLU_105066_1_3_6"/>
<dbReference type="OrthoDB" id="9797747at2"/>
<dbReference type="Proteomes" id="UP000001947">
    <property type="component" value="Chromosome"/>
</dbReference>
<dbReference type="GO" id="GO:0005829">
    <property type="term" value="C:cytosol"/>
    <property type="evidence" value="ECO:0007669"/>
    <property type="project" value="TreeGrafter"/>
</dbReference>
<dbReference type="GO" id="GO:0003677">
    <property type="term" value="F:DNA binding"/>
    <property type="evidence" value="ECO:0007669"/>
    <property type="project" value="UniProtKB-UniRule"/>
</dbReference>
<dbReference type="GO" id="GO:0030527">
    <property type="term" value="F:structural constituent of chromatin"/>
    <property type="evidence" value="ECO:0007669"/>
    <property type="project" value="InterPro"/>
</dbReference>
<dbReference type="GO" id="GO:0006310">
    <property type="term" value="P:DNA recombination"/>
    <property type="evidence" value="ECO:0007669"/>
    <property type="project" value="UniProtKB-UniRule"/>
</dbReference>
<dbReference type="GO" id="GO:0009893">
    <property type="term" value="P:positive regulation of metabolic process"/>
    <property type="evidence" value="ECO:0007669"/>
    <property type="project" value="UniProtKB-ARBA"/>
</dbReference>
<dbReference type="GO" id="GO:0006355">
    <property type="term" value="P:regulation of DNA-templated transcription"/>
    <property type="evidence" value="ECO:0007669"/>
    <property type="project" value="UniProtKB-UniRule"/>
</dbReference>
<dbReference type="GO" id="GO:0006417">
    <property type="term" value="P:regulation of translation"/>
    <property type="evidence" value="ECO:0007669"/>
    <property type="project" value="UniProtKB-UniRule"/>
</dbReference>
<dbReference type="CDD" id="cd13835">
    <property type="entry name" value="IHF_A"/>
    <property type="match status" value="1"/>
</dbReference>
<dbReference type="FunFam" id="4.10.520.10:FF:000002">
    <property type="entry name" value="Integration host factor subunit alpha"/>
    <property type="match status" value="1"/>
</dbReference>
<dbReference type="Gene3D" id="4.10.520.10">
    <property type="entry name" value="IHF-like DNA-binding proteins"/>
    <property type="match status" value="1"/>
</dbReference>
<dbReference type="HAMAP" id="MF_00380">
    <property type="entry name" value="IHF_alpha"/>
    <property type="match status" value="1"/>
</dbReference>
<dbReference type="InterPro" id="IPR000119">
    <property type="entry name" value="Hist_DNA-bd"/>
</dbReference>
<dbReference type="InterPro" id="IPR020816">
    <property type="entry name" value="Histone-like_DNA-bd_CS"/>
</dbReference>
<dbReference type="InterPro" id="IPR010992">
    <property type="entry name" value="IHF-like_DNA-bd_dom_sf"/>
</dbReference>
<dbReference type="InterPro" id="IPR005684">
    <property type="entry name" value="IHF_alpha"/>
</dbReference>
<dbReference type="NCBIfam" id="TIGR00987">
    <property type="entry name" value="himA"/>
    <property type="match status" value="1"/>
</dbReference>
<dbReference type="NCBIfam" id="NF001401">
    <property type="entry name" value="PRK00285.1"/>
    <property type="match status" value="1"/>
</dbReference>
<dbReference type="PANTHER" id="PTHR33175">
    <property type="entry name" value="DNA-BINDING PROTEIN HU"/>
    <property type="match status" value="1"/>
</dbReference>
<dbReference type="PANTHER" id="PTHR33175:SF2">
    <property type="entry name" value="INTEGRATION HOST FACTOR SUBUNIT ALPHA"/>
    <property type="match status" value="1"/>
</dbReference>
<dbReference type="Pfam" id="PF00216">
    <property type="entry name" value="Bac_DNA_binding"/>
    <property type="match status" value="1"/>
</dbReference>
<dbReference type="PRINTS" id="PR01727">
    <property type="entry name" value="DNABINDINGHU"/>
</dbReference>
<dbReference type="SMART" id="SM00411">
    <property type="entry name" value="BHL"/>
    <property type="match status" value="1"/>
</dbReference>
<dbReference type="SUPFAM" id="SSF47729">
    <property type="entry name" value="IHF-like DNA-binding proteins"/>
    <property type="match status" value="1"/>
</dbReference>
<dbReference type="PROSITE" id="PS00045">
    <property type="entry name" value="HISTONE_LIKE"/>
    <property type="match status" value="1"/>
</dbReference>
<evidence type="ECO:0000255" key="1">
    <source>
        <dbReference type="HAMAP-Rule" id="MF_00380"/>
    </source>
</evidence>
<accession>Q21KD4</accession>
<sequence length="101" mass="11586">MSTSLTKADLAEKLYEELGFNKREAKELVEHFFEEIRNSLEDNEQVKLSGFGNFDLRDKKQRPGRNPKTGEEIPITARRVVTFRPGQKLKARVEAYAGTKS</sequence>
<name>IHFA_SACD2</name>
<proteinExistence type="inferred from homology"/>
<feature type="chain" id="PRO_0000277770" description="Integration host factor subunit alpha">
    <location>
        <begin position="1"/>
        <end position="101"/>
    </location>
</feature>
<protein>
    <recommendedName>
        <fullName evidence="1">Integration host factor subunit alpha</fullName>
        <shortName evidence="1">IHF-alpha</shortName>
    </recommendedName>
</protein>